<feature type="chain" id="PRO_0000416431" description="Bifunctional NAD(P)H-hydrate repair enzyme Nnr">
    <location>
        <begin position="1"/>
        <end position="501"/>
    </location>
</feature>
<feature type="domain" description="YjeF N-terminal">
    <location>
        <begin position="9"/>
        <end position="217"/>
    </location>
</feature>
<feature type="domain" description="YjeF C-terminal">
    <location>
        <begin position="220"/>
        <end position="495"/>
    </location>
</feature>
<feature type="region of interest" description="NAD(P)H-hydrate epimerase" evidence="1">
    <location>
        <begin position="1"/>
        <end position="221"/>
    </location>
</feature>
<feature type="region of interest" description="NADPHX 1; for epimerase activity" evidence="1">
    <location>
        <begin position="56"/>
        <end position="60"/>
    </location>
</feature>
<feature type="region of interest" description="NADPHX 1; for epimerase activity" evidence="1">
    <location>
        <begin position="131"/>
        <end position="137"/>
    </location>
</feature>
<feature type="region of interest" description="ADP-dependent (S)-NAD(P)H-hydrate dehydratase" evidence="1">
    <location>
        <begin position="221"/>
        <end position="501"/>
    </location>
</feature>
<feature type="region of interest" description="NADPHX 2; for dehydratase activity" evidence="1">
    <location>
        <begin position="371"/>
        <end position="377"/>
    </location>
</feature>
<feature type="binding site" evidence="1">
    <location>
        <position position="57"/>
    </location>
    <ligand>
        <name>K(+)</name>
        <dbReference type="ChEBI" id="CHEBI:29103"/>
    </ligand>
</feature>
<feature type="binding site" evidence="1">
    <location>
        <position position="127"/>
    </location>
    <ligand>
        <name>K(+)</name>
        <dbReference type="ChEBI" id="CHEBI:29103"/>
    </ligand>
</feature>
<feature type="binding site" evidence="1">
    <location>
        <position position="160"/>
    </location>
    <ligand>
        <name>(6S)-NADPHX</name>
        <dbReference type="ChEBI" id="CHEBI:64076"/>
        <label>1</label>
        <note>for epimerase activity</note>
    </ligand>
</feature>
<feature type="binding site" evidence="1">
    <location>
        <position position="163"/>
    </location>
    <ligand>
        <name>K(+)</name>
        <dbReference type="ChEBI" id="CHEBI:29103"/>
    </ligand>
</feature>
<feature type="binding site" evidence="1">
    <location>
        <position position="323"/>
    </location>
    <ligand>
        <name>(6S)-NADPHX</name>
        <dbReference type="ChEBI" id="CHEBI:64076"/>
        <label>2</label>
        <note>for dehydratase activity</note>
    </ligand>
</feature>
<feature type="binding site" evidence="1">
    <location>
        <begin position="408"/>
        <end position="412"/>
    </location>
    <ligand>
        <name>ADP</name>
        <dbReference type="ChEBI" id="CHEBI:456216"/>
    </ligand>
</feature>
<feature type="binding site" evidence="1">
    <location>
        <begin position="427"/>
        <end position="436"/>
    </location>
    <ligand>
        <name>ADP</name>
        <dbReference type="ChEBI" id="CHEBI:456216"/>
    </ligand>
</feature>
<feature type="binding site" evidence="1">
    <location>
        <position position="437"/>
    </location>
    <ligand>
        <name>(6S)-NADPHX</name>
        <dbReference type="ChEBI" id="CHEBI:64076"/>
        <label>2</label>
        <note>for dehydratase activity</note>
    </ligand>
</feature>
<reference key="1">
    <citation type="journal article" date="2002" name="Proc. Natl. Acad. Sci. U.S.A.">
        <title>Genome sequence of the hyperthermophilic crenarchaeon Pyrobaculum aerophilum.</title>
        <authorList>
            <person name="Fitz-Gibbon S.T."/>
            <person name="Ladner H."/>
            <person name="Kim U.-J."/>
            <person name="Stetter K.O."/>
            <person name="Simon M.I."/>
            <person name="Miller J.H."/>
        </authorList>
    </citation>
    <scope>NUCLEOTIDE SEQUENCE [LARGE SCALE GENOMIC DNA]</scope>
    <source>
        <strain>ATCC 51768 / DSM 7523 / JCM 9630 / CIP 104966 / NBRC 100827 / IM2</strain>
    </source>
</reference>
<proteinExistence type="inferred from homology"/>
<dbReference type="EC" id="4.2.1.136"/>
<dbReference type="EC" id="5.1.99.6"/>
<dbReference type="EMBL" id="AE009441">
    <property type="protein sequence ID" value="AAL64252.1"/>
    <property type="molecule type" value="Genomic_DNA"/>
</dbReference>
<dbReference type="RefSeq" id="WP_011008720.1">
    <property type="nucleotide sequence ID" value="NC_003364.1"/>
</dbReference>
<dbReference type="SMR" id="Q8ZV04"/>
<dbReference type="FunCoup" id="Q8ZV04">
    <property type="interactions" value="44"/>
</dbReference>
<dbReference type="STRING" id="178306.PAE2520"/>
<dbReference type="EnsemblBacteria" id="AAL64252">
    <property type="protein sequence ID" value="AAL64252"/>
    <property type="gene ID" value="PAE2520"/>
</dbReference>
<dbReference type="GeneID" id="1464593"/>
<dbReference type="KEGG" id="pai:PAE2520"/>
<dbReference type="PATRIC" id="fig|178306.9.peg.1877"/>
<dbReference type="eggNOG" id="arCOG00018">
    <property type="taxonomic scope" value="Archaea"/>
</dbReference>
<dbReference type="HOGENOM" id="CLU_024853_4_1_2"/>
<dbReference type="InParanoid" id="Q8ZV04"/>
<dbReference type="Proteomes" id="UP000002439">
    <property type="component" value="Chromosome"/>
</dbReference>
<dbReference type="GO" id="GO:0052855">
    <property type="term" value="F:ADP-dependent NAD(P)H-hydrate dehydratase activity"/>
    <property type="evidence" value="ECO:0007669"/>
    <property type="project" value="UniProtKB-UniRule"/>
</dbReference>
<dbReference type="GO" id="GO:0005524">
    <property type="term" value="F:ATP binding"/>
    <property type="evidence" value="ECO:0007669"/>
    <property type="project" value="UniProtKB-KW"/>
</dbReference>
<dbReference type="GO" id="GO:0046872">
    <property type="term" value="F:metal ion binding"/>
    <property type="evidence" value="ECO:0007669"/>
    <property type="project" value="UniProtKB-KW"/>
</dbReference>
<dbReference type="GO" id="GO:0052856">
    <property type="term" value="F:NAD(P)HX epimerase activity"/>
    <property type="evidence" value="ECO:0007669"/>
    <property type="project" value="UniProtKB-UniRule"/>
</dbReference>
<dbReference type="GO" id="GO:0110051">
    <property type="term" value="P:metabolite repair"/>
    <property type="evidence" value="ECO:0000318"/>
    <property type="project" value="GO_Central"/>
</dbReference>
<dbReference type="GO" id="GO:0046496">
    <property type="term" value="P:nicotinamide nucleotide metabolic process"/>
    <property type="evidence" value="ECO:0007669"/>
    <property type="project" value="UniProtKB-UniRule"/>
</dbReference>
<dbReference type="CDD" id="cd01171">
    <property type="entry name" value="YXKO-related"/>
    <property type="match status" value="1"/>
</dbReference>
<dbReference type="FunFam" id="3.40.50.10260:FF:000003">
    <property type="entry name" value="Multifunctional fusion protein"/>
    <property type="match status" value="1"/>
</dbReference>
<dbReference type="Gene3D" id="3.40.1190.20">
    <property type="match status" value="1"/>
</dbReference>
<dbReference type="Gene3D" id="3.40.50.10260">
    <property type="entry name" value="YjeF N-terminal domain"/>
    <property type="match status" value="1"/>
</dbReference>
<dbReference type="HAMAP" id="MF_01965">
    <property type="entry name" value="NADHX_dehydratase"/>
    <property type="match status" value="1"/>
</dbReference>
<dbReference type="HAMAP" id="MF_01966">
    <property type="entry name" value="NADHX_epimerase"/>
    <property type="match status" value="1"/>
</dbReference>
<dbReference type="InterPro" id="IPR017953">
    <property type="entry name" value="Carbohydrate_kinase_pred_CS"/>
</dbReference>
<dbReference type="InterPro" id="IPR000631">
    <property type="entry name" value="CARKD"/>
</dbReference>
<dbReference type="InterPro" id="IPR030677">
    <property type="entry name" value="Nnr"/>
</dbReference>
<dbReference type="InterPro" id="IPR001763">
    <property type="entry name" value="Rhodanese-like_dom"/>
</dbReference>
<dbReference type="InterPro" id="IPR029056">
    <property type="entry name" value="Ribokinase-like"/>
</dbReference>
<dbReference type="InterPro" id="IPR004443">
    <property type="entry name" value="YjeF_N_dom"/>
</dbReference>
<dbReference type="InterPro" id="IPR036652">
    <property type="entry name" value="YjeF_N_dom_sf"/>
</dbReference>
<dbReference type="NCBIfam" id="TIGR00196">
    <property type="entry name" value="yjeF_cterm"/>
    <property type="match status" value="1"/>
</dbReference>
<dbReference type="NCBIfam" id="TIGR00197">
    <property type="entry name" value="yjeF_nterm"/>
    <property type="match status" value="1"/>
</dbReference>
<dbReference type="PANTHER" id="PTHR12592:SF0">
    <property type="entry name" value="ATP-DEPENDENT (S)-NAD(P)H-HYDRATE DEHYDRATASE"/>
    <property type="match status" value="1"/>
</dbReference>
<dbReference type="PANTHER" id="PTHR12592">
    <property type="entry name" value="ATP-DEPENDENT (S)-NAD(P)H-HYDRATE DEHYDRATASE FAMILY MEMBER"/>
    <property type="match status" value="1"/>
</dbReference>
<dbReference type="Pfam" id="PF01256">
    <property type="entry name" value="Carb_kinase"/>
    <property type="match status" value="1"/>
</dbReference>
<dbReference type="Pfam" id="PF03853">
    <property type="entry name" value="YjeF_N"/>
    <property type="match status" value="1"/>
</dbReference>
<dbReference type="PIRSF" id="PIRSF017184">
    <property type="entry name" value="Nnr"/>
    <property type="match status" value="1"/>
</dbReference>
<dbReference type="SUPFAM" id="SSF53613">
    <property type="entry name" value="Ribokinase-like"/>
    <property type="match status" value="1"/>
</dbReference>
<dbReference type="SUPFAM" id="SSF64153">
    <property type="entry name" value="YjeF N-terminal domain-like"/>
    <property type="match status" value="1"/>
</dbReference>
<dbReference type="PROSITE" id="PS01050">
    <property type="entry name" value="YJEF_C_2"/>
    <property type="match status" value="1"/>
</dbReference>
<dbReference type="PROSITE" id="PS51383">
    <property type="entry name" value="YJEF_C_3"/>
    <property type="match status" value="1"/>
</dbReference>
<dbReference type="PROSITE" id="PS51385">
    <property type="entry name" value="YJEF_N"/>
    <property type="match status" value="1"/>
</dbReference>
<keyword id="KW-0067">ATP-binding</keyword>
<keyword id="KW-0413">Isomerase</keyword>
<keyword id="KW-0456">Lyase</keyword>
<keyword id="KW-0479">Metal-binding</keyword>
<keyword id="KW-0511">Multifunctional enzyme</keyword>
<keyword id="KW-0520">NAD</keyword>
<keyword id="KW-0521">NADP</keyword>
<keyword id="KW-0547">Nucleotide-binding</keyword>
<keyword id="KW-0630">Potassium</keyword>
<keyword id="KW-1185">Reference proteome</keyword>
<protein>
    <recommendedName>
        <fullName>Bifunctional NAD(P)H-hydrate repair enzyme Nnr</fullName>
    </recommendedName>
    <alternativeName>
        <fullName>Nicotinamide nucleotide repair protein</fullName>
    </alternativeName>
    <domain>
        <recommendedName>
            <fullName>ADP-dependent (S)-NAD(P)H-hydrate dehydratase</fullName>
            <ecNumber>4.2.1.136</ecNumber>
        </recommendedName>
        <alternativeName>
            <fullName>ADP-dependent NAD(P)HX dehydratase</fullName>
        </alternativeName>
    </domain>
    <domain>
        <recommendedName>
            <fullName>NAD(P)H-hydrate epimerase</fullName>
            <ecNumber>5.1.99.6</ecNumber>
        </recommendedName>
        <alternativeName>
            <fullName>NAD(P)HX epimerase</fullName>
        </alternativeName>
    </domain>
</protein>
<evidence type="ECO:0000250" key="1"/>
<evidence type="ECO:0000305" key="2"/>
<gene>
    <name type="primary">nnr</name>
    <name type="ordered locus">PAE2520</name>
</gene>
<name>NNR_PYRAE</name>
<sequence length="501" mass="53031">MESITSIEMYVADRNAEWLGVPRLVLMENAGAAVARNVLRKFPTAKRILVVCGTGDNGGDGYVAARHLHAAGRTVRVIALGEPREELARINYQAVTRLWGVEVKAAQLPLELLALQDWFMWAEVIVDAVLGTGIRGVLREPHATAIELMNISPAPKVAVDVPSGLDPDTGEVRDKAVRAALTVTFHKAKRGLLAPGAQRYVGELVVEPIGIPPEAELVVGPGDFAYLNFTRRADSKKGDHGRVLVIGGSLEYSGAPVYVALAALRAGVDLAVIAAPEPAAYAAKAISPDIIAIPLEGPRLSTKHVDKLASLAERFNVVAMGPGLGVEEETQEAVRELFRRLAGKRAMVIDADALKALRGVRASGAVVYTPHAGEFKALTGAEPPQSLSERMAVVREQAAALGGVILLKGRYDVISDGVRVKVNMTGTPAMTVGGTGDVLTGLVAAFLTKTSDPLEAAAVAAFVNGLAGEDAAAELGFHITASDLIERLPRVIRRYAFESIR</sequence>
<accession>Q8ZV04</accession>
<comment type="function">
    <text evidence="1">Bifunctional enzyme that catalyzes the epimerization of the S- and R-forms of NAD(P)HX and the dehydration of the S-form of NAD(P)HX at the expense of ADP, which is converted to AMP. This allows the repair of both epimers of NAD(P)HX, a damaged form of NAD(P)H that is a result of enzymatic or heat-dependent hydration (By similarity).</text>
</comment>
<comment type="catalytic activity">
    <reaction>
        <text>(6S)-NADHX + ADP = AMP + phosphate + NADH + H(+)</text>
        <dbReference type="Rhea" id="RHEA:32223"/>
        <dbReference type="ChEBI" id="CHEBI:15378"/>
        <dbReference type="ChEBI" id="CHEBI:43474"/>
        <dbReference type="ChEBI" id="CHEBI:57945"/>
        <dbReference type="ChEBI" id="CHEBI:64074"/>
        <dbReference type="ChEBI" id="CHEBI:456215"/>
        <dbReference type="ChEBI" id="CHEBI:456216"/>
        <dbReference type="EC" id="4.2.1.136"/>
    </reaction>
</comment>
<comment type="catalytic activity">
    <reaction>
        <text>(6S)-NADPHX + ADP = AMP + phosphate + NADPH + H(+)</text>
        <dbReference type="Rhea" id="RHEA:32235"/>
        <dbReference type="ChEBI" id="CHEBI:15378"/>
        <dbReference type="ChEBI" id="CHEBI:43474"/>
        <dbReference type="ChEBI" id="CHEBI:57783"/>
        <dbReference type="ChEBI" id="CHEBI:64076"/>
        <dbReference type="ChEBI" id="CHEBI:456215"/>
        <dbReference type="ChEBI" id="CHEBI:456216"/>
        <dbReference type="EC" id="4.2.1.136"/>
    </reaction>
</comment>
<comment type="catalytic activity">
    <reaction>
        <text>(6R)-NADHX = (6S)-NADHX</text>
        <dbReference type="Rhea" id="RHEA:32215"/>
        <dbReference type="ChEBI" id="CHEBI:64074"/>
        <dbReference type="ChEBI" id="CHEBI:64075"/>
        <dbReference type="EC" id="5.1.99.6"/>
    </reaction>
</comment>
<comment type="catalytic activity">
    <reaction>
        <text>(6R)-NADPHX = (6S)-NADPHX</text>
        <dbReference type="Rhea" id="RHEA:32227"/>
        <dbReference type="ChEBI" id="CHEBI:64076"/>
        <dbReference type="ChEBI" id="CHEBI:64077"/>
        <dbReference type="EC" id="5.1.99.6"/>
    </reaction>
</comment>
<comment type="cofactor">
    <cofactor evidence="1">
        <name>K(+)</name>
        <dbReference type="ChEBI" id="CHEBI:29103"/>
    </cofactor>
    <text evidence="1">Binds 1 potassium ion per subunit.</text>
</comment>
<comment type="similarity">
    <text evidence="2">In the N-terminal section; belongs to the NnrE/AIBP family.</text>
</comment>
<comment type="similarity">
    <text evidence="2">In the C-terminal section; belongs to the NnrD/CARKD family.</text>
</comment>
<organism>
    <name type="scientific">Pyrobaculum aerophilum (strain ATCC 51768 / DSM 7523 / JCM 9630 / CIP 104966 / NBRC 100827 / IM2)</name>
    <dbReference type="NCBI Taxonomy" id="178306"/>
    <lineage>
        <taxon>Archaea</taxon>
        <taxon>Thermoproteota</taxon>
        <taxon>Thermoprotei</taxon>
        <taxon>Thermoproteales</taxon>
        <taxon>Thermoproteaceae</taxon>
        <taxon>Pyrobaculum</taxon>
    </lineage>
</organism>